<accession>P81903</accession>
<keyword id="KW-0007">Acetylation</keyword>
<keyword id="KW-0044">Antibiotic</keyword>
<keyword id="KW-0929">Antimicrobial</keyword>
<keyword id="KW-0158">Chromosome</keyword>
<keyword id="KW-0903">Direct protein sequencing</keyword>
<keyword id="KW-0238">DNA-binding</keyword>
<keyword id="KW-0295">Fungicide</keyword>
<keyword id="KW-1017">Isopeptide bond</keyword>
<keyword id="KW-0544">Nucleosome core</keyword>
<keyword id="KW-0539">Nucleus</keyword>
<keyword id="KW-0597">Phosphoprotein</keyword>
<keyword id="KW-0832">Ubl conjugation</keyword>
<protein>
    <recommendedName>
        <fullName>Histone H2B 1</fullName>
    </recommendedName>
    <alternativeName>
        <fullName>Antibacterial histone-like protein 1</fullName>
        <shortName>HLP-1</shortName>
    </alternativeName>
</protein>
<proteinExistence type="evidence at protein level"/>
<sequence>MPDPAKTAPKKGSKKAVTKXA</sequence>
<dbReference type="STRING" id="7998.ENSIPUP00000001901"/>
<dbReference type="Proteomes" id="UP000221080">
    <property type="component" value="Unplaced"/>
</dbReference>
<dbReference type="GO" id="GO:0000786">
    <property type="term" value="C:nucleosome"/>
    <property type="evidence" value="ECO:0007669"/>
    <property type="project" value="UniProtKB-KW"/>
</dbReference>
<dbReference type="GO" id="GO:0005634">
    <property type="term" value="C:nucleus"/>
    <property type="evidence" value="ECO:0007669"/>
    <property type="project" value="UniProtKB-SubCell"/>
</dbReference>
<dbReference type="GO" id="GO:0003677">
    <property type="term" value="F:DNA binding"/>
    <property type="evidence" value="ECO:0007669"/>
    <property type="project" value="UniProtKB-KW"/>
</dbReference>
<dbReference type="GO" id="GO:0042742">
    <property type="term" value="P:defense response to bacterium"/>
    <property type="evidence" value="ECO:0000314"/>
    <property type="project" value="AgBase"/>
</dbReference>
<dbReference type="GO" id="GO:0050832">
    <property type="term" value="P:defense response to fungus"/>
    <property type="evidence" value="ECO:0000314"/>
    <property type="project" value="AgBase"/>
</dbReference>
<dbReference type="GO" id="GO:0045087">
    <property type="term" value="P:innate immune response"/>
    <property type="evidence" value="ECO:0000314"/>
    <property type="project" value="AgBase"/>
</dbReference>
<dbReference type="GO" id="GO:0031640">
    <property type="term" value="P:killing of cells of another organism"/>
    <property type="evidence" value="ECO:0007669"/>
    <property type="project" value="UniProtKB-KW"/>
</dbReference>
<reference evidence="6" key="1">
    <citation type="journal article" date="1998" name="Cell. Mol. Life Sci.">
        <title>Antimicrobial activity in the skin of the channel catfish Ictalurus punctatus: characterization of broad-spectrum histone-like antimicrobial proteins.</title>
        <authorList>
            <person name="Robinette D."/>
            <person name="Wada S."/>
            <person name="Arroll T."/>
            <person name="Levy M.G."/>
            <person name="Miller W.L."/>
            <person name="Noga E.J."/>
        </authorList>
    </citation>
    <scope>PROTEIN SEQUENCE OF 2-21</scope>
    <scope>FUNCTION</scope>
    <scope>MASS SPECTROMETRY</scope>
    <source>
        <tissue>Skin</tissue>
    </source>
</reference>
<evidence type="ECO:0000250" key="1">
    <source>
        <dbReference type="UniProtKB" id="P06900"/>
    </source>
</evidence>
<evidence type="ECO:0000250" key="2">
    <source>
        <dbReference type="UniProtKB" id="P0C1H4"/>
    </source>
</evidence>
<evidence type="ECO:0000250" key="3">
    <source>
        <dbReference type="UniProtKB" id="P33778"/>
    </source>
</evidence>
<evidence type="ECO:0000256" key="4">
    <source>
        <dbReference type="SAM" id="MobiDB-lite"/>
    </source>
</evidence>
<evidence type="ECO:0000269" key="5">
    <source>
    </source>
</evidence>
<evidence type="ECO:0000305" key="6"/>
<feature type="initiator methionine" description="Removed" evidence="5">
    <location>
        <position position="1"/>
    </location>
</feature>
<feature type="chain" id="PRO_0000071849" description="Histone H2B 1">
    <location>
        <begin position="2"/>
        <end position="21" status="greater than"/>
    </location>
</feature>
<feature type="region of interest" description="Disordered" evidence="4">
    <location>
        <begin position="1"/>
        <end position="21"/>
    </location>
</feature>
<feature type="compositionally biased region" description="Basic residues" evidence="4">
    <location>
        <begin position="8"/>
        <end position="21"/>
    </location>
</feature>
<feature type="modified residue" description="N6-acetyllysine" evidence="2">
    <location>
        <position position="6"/>
    </location>
</feature>
<feature type="modified residue" description="N6-acetyllysine" evidence="2">
    <location>
        <position position="11"/>
    </location>
</feature>
<feature type="modified residue" description="Phosphoserine" evidence="1">
    <location>
        <position position="13"/>
    </location>
</feature>
<feature type="modified residue" description="N6-acetyllysine" evidence="2">
    <location>
        <position position="14"/>
    </location>
</feature>
<feature type="modified residue" description="N6-acetyllysine" evidence="2">
    <location>
        <position position="19"/>
    </location>
</feature>
<feature type="cross-link" description="Glycyl lysine isopeptide (Lys-Gly) (interchain with G-Cter in ubiquitin)" evidence="2">
    <location>
        <position position="19"/>
    </location>
</feature>
<feature type="non-terminal residue">
    <location>
        <position position="21"/>
    </location>
</feature>
<comment type="function">
    <text evidence="5">Core component of nucleosome. Nucleosomes wrap and compact DNA into chromatin, limiting DNA accessibility to the cellular machineries which require DNA as a template. Histones thereby play a central role in transcription regulation, DNA repair, DNA replication and chromosomal stability. DNA accessibility is regulated via a complex set of post-translational modifications of histones, also called histone code, and nucleosome remodeling.</text>
</comment>
<comment type="function">
    <text evidence="5">Has broad-spectrum antimicrobial and antibacterial activity. It is important in the antimicrobial defenses of fish skin and possesses strong activity against saprolegnia, the most common fungal infection in fish. It is also inhibitory to fish bacterial pathogens, such as aeromonas hydrophila, vibrio alginolyticus and E.coli D31.</text>
</comment>
<comment type="subunit">
    <text>The nucleosome is a histone octamer containing two molecules each of H2A, H2B, H3 and H4 assembled in one H3-H4 heterotetramer and two H2A-H2B heterodimers. The octamer wraps approximately 147 bp of DNA.</text>
</comment>
<comment type="subcellular location">
    <subcellularLocation>
        <location>Nucleus</location>
    </subcellularLocation>
    <subcellularLocation>
        <location>Chromosome</location>
    </subcellularLocation>
</comment>
<comment type="PTM">
    <text evidence="3">Monoubiquitination at the C-terminal Lys gives a specific tag for epigenetic transcriptional activation and is also prerequisite for histone H3 'Lys-4' and 'Lys-79' methylation.</text>
</comment>
<comment type="PTM">
    <text evidence="1">Phosphorylated during apoptosis; which facilitates apoptotic chromatin condensation.</text>
</comment>
<comment type="mass spectrometry">
    <text>The measured range is 2-21.</text>
</comment>
<comment type="similarity">
    <text evidence="6">Belongs to the histone H2B family.</text>
</comment>
<organism evidence="6">
    <name type="scientific">Ictalurus punctatus</name>
    <name type="common">Channel catfish</name>
    <name type="synonym">Silurus punctatus</name>
    <dbReference type="NCBI Taxonomy" id="7998"/>
    <lineage>
        <taxon>Eukaryota</taxon>
        <taxon>Metazoa</taxon>
        <taxon>Chordata</taxon>
        <taxon>Craniata</taxon>
        <taxon>Vertebrata</taxon>
        <taxon>Euteleostomi</taxon>
        <taxon>Actinopterygii</taxon>
        <taxon>Neopterygii</taxon>
        <taxon>Teleostei</taxon>
        <taxon>Ostariophysi</taxon>
        <taxon>Siluriformes</taxon>
        <taxon>Ictaluridae</taxon>
        <taxon>Ictalurus</taxon>
    </lineage>
</organism>
<name>H2B1_ICTPU</name>